<feature type="chain" id="PRO_1000069018" description="Probable phosphatase YcdX">
    <location>
        <begin position="1"/>
        <end position="245"/>
    </location>
</feature>
<feature type="binding site" evidence="1">
    <location>
        <position position="7"/>
    </location>
    <ligand>
        <name>Zn(2+)</name>
        <dbReference type="ChEBI" id="CHEBI:29105"/>
        <label>1</label>
    </ligand>
</feature>
<feature type="binding site" evidence="1">
    <location>
        <position position="9"/>
    </location>
    <ligand>
        <name>Zn(2+)</name>
        <dbReference type="ChEBI" id="CHEBI:29105"/>
        <label>1</label>
    </ligand>
</feature>
<feature type="binding site" evidence="1">
    <location>
        <position position="15"/>
    </location>
    <ligand>
        <name>Zn(2+)</name>
        <dbReference type="ChEBI" id="CHEBI:29105"/>
        <label>2</label>
    </ligand>
</feature>
<feature type="binding site" evidence="1">
    <location>
        <position position="40"/>
    </location>
    <ligand>
        <name>Zn(2+)</name>
        <dbReference type="ChEBI" id="CHEBI:29105"/>
        <label>2</label>
    </ligand>
</feature>
<feature type="binding site" evidence="1">
    <location>
        <position position="73"/>
    </location>
    <ligand>
        <name>Zn(2+)</name>
        <dbReference type="ChEBI" id="CHEBI:29105"/>
        <label>1</label>
    </ligand>
</feature>
<feature type="binding site" evidence="1">
    <location>
        <position position="73"/>
    </location>
    <ligand>
        <name>Zn(2+)</name>
        <dbReference type="ChEBI" id="CHEBI:29105"/>
        <label>3</label>
    </ligand>
</feature>
<feature type="binding site" evidence="1">
    <location>
        <position position="101"/>
    </location>
    <ligand>
        <name>Zn(2+)</name>
        <dbReference type="ChEBI" id="CHEBI:29105"/>
        <label>3</label>
    </ligand>
</feature>
<feature type="binding site" evidence="1">
    <location>
        <position position="131"/>
    </location>
    <ligand>
        <name>Zn(2+)</name>
        <dbReference type="ChEBI" id="CHEBI:29105"/>
        <label>3</label>
    </ligand>
</feature>
<feature type="binding site" evidence="1">
    <location>
        <position position="192"/>
    </location>
    <ligand>
        <name>Zn(2+)</name>
        <dbReference type="ChEBI" id="CHEBI:29105"/>
        <label>1</label>
    </ligand>
</feature>
<feature type="binding site" evidence="1">
    <location>
        <position position="194"/>
    </location>
    <ligand>
        <name>Zn(2+)</name>
        <dbReference type="ChEBI" id="CHEBI:29105"/>
        <label>2</label>
    </ligand>
</feature>
<reference key="1">
    <citation type="journal article" date="2007" name="J. Bacteriol.">
        <title>The genome sequence of avian pathogenic Escherichia coli strain O1:K1:H7 shares strong similarities with human extraintestinal pathogenic E. coli genomes.</title>
        <authorList>
            <person name="Johnson T.J."/>
            <person name="Kariyawasam S."/>
            <person name="Wannemuehler Y."/>
            <person name="Mangiamele P."/>
            <person name="Johnson S.J."/>
            <person name="Doetkott C."/>
            <person name="Skyberg J.A."/>
            <person name="Lynne A.M."/>
            <person name="Johnson J.R."/>
            <person name="Nolan L.K."/>
        </authorList>
    </citation>
    <scope>NUCLEOTIDE SEQUENCE [LARGE SCALE GENOMIC DNA]</scope>
</reference>
<sequence length="245" mass="26832">MYPVDLHMHTVASTHAYSTLSDYIAQAKQKGIKLFAITDHGPDMEDAPHHWHFINMRIWPRVVDGVGILRGIEANIKNVDGEIDCSGKMFDSLDLIIAGFHEPVFAPHDKATNTQAMIATIASGNVHIISHPGNPKYEIDVKAVAEAAAKHQVALEINNSSFLHSRKGSEDNCRAVAAAVRDAGGWVALGSDSHTAFTMGEFEECLKILDAVDFPPERILNVSPRRLLNFLESRGMAPIAEFADL</sequence>
<proteinExistence type="inferred from homology"/>
<name>YCDX_ECOK1</name>
<keyword id="KW-0378">Hydrolase</keyword>
<keyword id="KW-0479">Metal-binding</keyword>
<keyword id="KW-1185">Reference proteome</keyword>
<keyword id="KW-0862">Zinc</keyword>
<accession>A1A9T2</accession>
<evidence type="ECO:0000255" key="1">
    <source>
        <dbReference type="HAMAP-Rule" id="MF_01561"/>
    </source>
</evidence>
<gene>
    <name evidence="1" type="primary">ycdX</name>
    <name type="ordered locus">Ecok1_09280</name>
    <name type="ORF">APECO1_119</name>
</gene>
<dbReference type="EC" id="3.1.3.-" evidence="1"/>
<dbReference type="EMBL" id="CP000468">
    <property type="protein sequence ID" value="ABJ00422.1"/>
    <property type="molecule type" value="Genomic_DNA"/>
</dbReference>
<dbReference type="RefSeq" id="WP_000283664.1">
    <property type="nucleotide sequence ID" value="NZ_CADILS010000112.1"/>
</dbReference>
<dbReference type="SMR" id="A1A9T2"/>
<dbReference type="GeneID" id="93776384"/>
<dbReference type="KEGG" id="ecv:APECO1_119"/>
<dbReference type="HOGENOM" id="CLU_061999_0_1_6"/>
<dbReference type="Proteomes" id="UP000008216">
    <property type="component" value="Chromosome"/>
</dbReference>
<dbReference type="GO" id="GO:0005829">
    <property type="term" value="C:cytosol"/>
    <property type="evidence" value="ECO:0007669"/>
    <property type="project" value="TreeGrafter"/>
</dbReference>
<dbReference type="GO" id="GO:0016791">
    <property type="term" value="F:phosphatase activity"/>
    <property type="evidence" value="ECO:0007669"/>
    <property type="project" value="UniProtKB-UniRule"/>
</dbReference>
<dbReference type="GO" id="GO:0008270">
    <property type="term" value="F:zinc ion binding"/>
    <property type="evidence" value="ECO:0007669"/>
    <property type="project" value="UniProtKB-UniRule"/>
</dbReference>
<dbReference type="GO" id="GO:0071978">
    <property type="term" value="P:bacterial-type flagellum-dependent swarming motility"/>
    <property type="evidence" value="ECO:0007669"/>
    <property type="project" value="TreeGrafter"/>
</dbReference>
<dbReference type="CDD" id="cd07437">
    <property type="entry name" value="PHP_HisPPase_Ycdx_like"/>
    <property type="match status" value="1"/>
</dbReference>
<dbReference type="FunFam" id="3.20.20.140:FF:000008">
    <property type="entry name" value="Probable phosphatase YcdX"/>
    <property type="match status" value="1"/>
</dbReference>
<dbReference type="Gene3D" id="3.20.20.140">
    <property type="entry name" value="Metal-dependent hydrolases"/>
    <property type="match status" value="1"/>
</dbReference>
<dbReference type="HAMAP" id="MF_01561">
    <property type="entry name" value="YcdX_phosphat"/>
    <property type="match status" value="1"/>
</dbReference>
<dbReference type="InterPro" id="IPR023710">
    <property type="entry name" value="Phosphatase_YcdX_put"/>
</dbReference>
<dbReference type="InterPro" id="IPR004013">
    <property type="entry name" value="PHP_dom"/>
</dbReference>
<dbReference type="InterPro" id="IPR050243">
    <property type="entry name" value="PHP_phosphatase"/>
</dbReference>
<dbReference type="InterPro" id="IPR003141">
    <property type="entry name" value="Pol/His_phosphatase_N"/>
</dbReference>
<dbReference type="InterPro" id="IPR016195">
    <property type="entry name" value="Pol/histidinol_Pase-like"/>
</dbReference>
<dbReference type="NCBIfam" id="NF006702">
    <property type="entry name" value="PRK09248.1"/>
    <property type="match status" value="1"/>
</dbReference>
<dbReference type="PANTHER" id="PTHR36928">
    <property type="entry name" value="PHOSPHATASE YCDX-RELATED"/>
    <property type="match status" value="1"/>
</dbReference>
<dbReference type="PANTHER" id="PTHR36928:SF1">
    <property type="entry name" value="PHOSPHATASE YCDX-RELATED"/>
    <property type="match status" value="1"/>
</dbReference>
<dbReference type="Pfam" id="PF02811">
    <property type="entry name" value="PHP"/>
    <property type="match status" value="1"/>
</dbReference>
<dbReference type="SMART" id="SM00481">
    <property type="entry name" value="POLIIIAc"/>
    <property type="match status" value="1"/>
</dbReference>
<dbReference type="SUPFAM" id="SSF89550">
    <property type="entry name" value="PHP domain-like"/>
    <property type="match status" value="1"/>
</dbReference>
<comment type="cofactor">
    <cofactor evidence="1">
        <name>Zn(2+)</name>
        <dbReference type="ChEBI" id="CHEBI:29105"/>
    </cofactor>
    <text evidence="1">Binds 3 Zn(2+) ions per subunit.</text>
</comment>
<comment type="subunit">
    <text evidence="1">Homotrimer.</text>
</comment>
<comment type="similarity">
    <text evidence="1">Belongs to the PHP family.</text>
</comment>
<organism>
    <name type="scientific">Escherichia coli O1:K1 / APEC</name>
    <dbReference type="NCBI Taxonomy" id="405955"/>
    <lineage>
        <taxon>Bacteria</taxon>
        <taxon>Pseudomonadati</taxon>
        <taxon>Pseudomonadota</taxon>
        <taxon>Gammaproteobacteria</taxon>
        <taxon>Enterobacterales</taxon>
        <taxon>Enterobacteriaceae</taxon>
        <taxon>Escherichia</taxon>
    </lineage>
</organism>
<protein>
    <recommendedName>
        <fullName evidence="1">Probable phosphatase YcdX</fullName>
        <ecNumber evidence="1">3.1.3.-</ecNumber>
    </recommendedName>
</protein>